<evidence type="ECO:0000250" key="1">
    <source>
        <dbReference type="UniProtKB" id="P9WII5"/>
    </source>
</evidence>
<evidence type="ECO:0000305" key="2"/>
<dbReference type="EC" id="3.1.-.-"/>
<dbReference type="EMBL" id="AE000516">
    <property type="protein sequence ID" value="AAK45809.1"/>
    <property type="molecule type" value="Genomic_DNA"/>
</dbReference>
<dbReference type="PIR" id="B70712">
    <property type="entry name" value="B70712"/>
</dbReference>
<dbReference type="RefSeq" id="WP_003407593.1">
    <property type="nucleotide sequence ID" value="NZ_KK341227.1"/>
</dbReference>
<dbReference type="SMR" id="P9WII4"/>
<dbReference type="GeneID" id="45425475"/>
<dbReference type="KEGG" id="mtc:MT1542"/>
<dbReference type="PATRIC" id="fig|83331.31.peg.1659"/>
<dbReference type="HOGENOM" id="CLU_176190_0_0_11"/>
<dbReference type="Proteomes" id="UP000001020">
    <property type="component" value="Chromosome"/>
</dbReference>
<dbReference type="GO" id="GO:0003677">
    <property type="term" value="F:DNA binding"/>
    <property type="evidence" value="ECO:0007669"/>
    <property type="project" value="InterPro"/>
</dbReference>
<dbReference type="GO" id="GO:0004521">
    <property type="term" value="F:RNA endonuclease activity"/>
    <property type="evidence" value="ECO:0007669"/>
    <property type="project" value="TreeGrafter"/>
</dbReference>
<dbReference type="GO" id="GO:0006402">
    <property type="term" value="P:mRNA catabolic process"/>
    <property type="evidence" value="ECO:0007669"/>
    <property type="project" value="TreeGrafter"/>
</dbReference>
<dbReference type="GO" id="GO:0016075">
    <property type="term" value="P:rRNA catabolic process"/>
    <property type="evidence" value="ECO:0007669"/>
    <property type="project" value="TreeGrafter"/>
</dbReference>
<dbReference type="Gene3D" id="2.30.30.110">
    <property type="match status" value="1"/>
</dbReference>
<dbReference type="InterPro" id="IPR003477">
    <property type="entry name" value="PemK-like"/>
</dbReference>
<dbReference type="InterPro" id="IPR011067">
    <property type="entry name" value="Plasmid_toxin/cell-grow_inhib"/>
</dbReference>
<dbReference type="PANTHER" id="PTHR33988:SF2">
    <property type="entry name" value="ENDORIBONUCLEASE MAZF"/>
    <property type="match status" value="1"/>
</dbReference>
<dbReference type="PANTHER" id="PTHR33988">
    <property type="entry name" value="ENDORIBONUCLEASE MAZF-RELATED"/>
    <property type="match status" value="1"/>
</dbReference>
<dbReference type="Pfam" id="PF02452">
    <property type="entry name" value="PemK_toxin"/>
    <property type="match status" value="1"/>
</dbReference>
<dbReference type="SUPFAM" id="SSF50118">
    <property type="entry name" value="Cell growth inhibitor/plasmid maintenance toxic component"/>
    <property type="match status" value="1"/>
</dbReference>
<organism>
    <name type="scientific">Mycobacterium tuberculosis (strain CDC 1551 / Oshkosh)</name>
    <dbReference type="NCBI Taxonomy" id="83331"/>
    <lineage>
        <taxon>Bacteria</taxon>
        <taxon>Bacillati</taxon>
        <taxon>Actinomycetota</taxon>
        <taxon>Actinomycetes</taxon>
        <taxon>Mycobacteriales</taxon>
        <taxon>Mycobacteriaceae</taxon>
        <taxon>Mycobacterium</taxon>
        <taxon>Mycobacterium tuberculosis complex</taxon>
    </lineage>
</organism>
<reference key="1">
    <citation type="journal article" date="2002" name="J. Bacteriol.">
        <title>Whole-genome comparison of Mycobacterium tuberculosis clinical and laboratory strains.</title>
        <authorList>
            <person name="Fleischmann R.D."/>
            <person name="Alland D."/>
            <person name="Eisen J.A."/>
            <person name="Carpenter L."/>
            <person name="White O."/>
            <person name="Peterson J.D."/>
            <person name="DeBoy R.T."/>
            <person name="Dodson R.J."/>
            <person name="Gwinn M.L."/>
            <person name="Haft D.H."/>
            <person name="Hickey E.K."/>
            <person name="Kolonay J.F."/>
            <person name="Nelson W.C."/>
            <person name="Umayam L.A."/>
            <person name="Ermolaeva M.D."/>
            <person name="Salzberg S.L."/>
            <person name="Delcher A."/>
            <person name="Utterback T.R."/>
            <person name="Weidman J.F."/>
            <person name="Khouri H.M."/>
            <person name="Gill J."/>
            <person name="Mikula A."/>
            <person name="Bishai W."/>
            <person name="Jacobs W.R. Jr."/>
            <person name="Venter J.C."/>
            <person name="Fraser C.M."/>
        </authorList>
    </citation>
    <scope>NUCLEOTIDE SEQUENCE [LARGE SCALE GENOMIC DNA]</scope>
    <source>
        <strain>CDC 1551 / Oshkosh</strain>
    </source>
</reference>
<feature type="chain" id="PRO_0000428001" description="Endoribonuclease MazF4">
    <location>
        <begin position="1"/>
        <end position="105"/>
    </location>
</feature>
<comment type="function">
    <text evidence="1">Toxic component of a type II toxin-antitoxin (TA) system. Acts as an endoribonuclease on single-strand RNA, cleaving between the first and second bases in the sequence UCGCU. Neutralized by cognate antitoxin MazE4.</text>
</comment>
<comment type="subunit">
    <text evidence="1">Forms a complex with cognate antitoxin MazE4.</text>
</comment>
<comment type="similarity">
    <text evidence="2">Belongs to the PemK/MazF family.</text>
</comment>
<proteinExistence type="inferred from homology"/>
<keyword id="KW-0255">Endonuclease</keyword>
<keyword id="KW-0378">Hydrolase</keyword>
<keyword id="KW-0540">Nuclease</keyword>
<keyword id="KW-1185">Reference proteome</keyword>
<keyword id="KW-1277">Toxin-antitoxin system</keyword>
<accession>P9WII4</accession>
<accession>L0T6U0</accession>
<accession>P64859</accession>
<accession>P71776</accession>
<gene>
    <name type="primary">mazF4</name>
    <name type="ordered locus">MT1542</name>
</gene>
<protein>
    <recommendedName>
        <fullName evidence="2">Endoribonuclease MazF4</fullName>
        <ecNumber>3.1.-.-</ecNumber>
    </recommendedName>
    <alternativeName>
        <fullName>Toxin MazF4</fullName>
    </alternativeName>
    <alternativeName>
        <fullName>mRNA interferase MazF4</fullName>
    </alternativeName>
</protein>
<sequence length="105" mass="11410">MNAPLRGQVYRCDLGYGAKPWLIVSNNARNRHTADVVAVRLTTTRRTIPTWVAMGPSDPLTGYVNADNIETLGKDELGDYLGEVTPATMNKINTALATALGLPWP</sequence>
<name>MAZF4_MYCTO</name>